<gene>
    <name type="primary">CLF1</name>
    <name type="ordered locus">KLLA0F17996g</name>
</gene>
<proteinExistence type="inferred from homology"/>
<organism>
    <name type="scientific">Kluyveromyces lactis (strain ATCC 8585 / CBS 2359 / DSM 70799 / NBRC 1267 / NRRL Y-1140 / WM37)</name>
    <name type="common">Yeast</name>
    <name type="synonym">Candida sphaerica</name>
    <dbReference type="NCBI Taxonomy" id="284590"/>
    <lineage>
        <taxon>Eukaryota</taxon>
        <taxon>Fungi</taxon>
        <taxon>Dikarya</taxon>
        <taxon>Ascomycota</taxon>
        <taxon>Saccharomycotina</taxon>
        <taxon>Saccharomycetes</taxon>
        <taxon>Saccharomycetales</taxon>
        <taxon>Saccharomycetaceae</taxon>
        <taxon>Kluyveromyces</taxon>
    </lineage>
</organism>
<feature type="chain" id="PRO_0000205746" description="Pre-mRNA-splicing factor CLF1">
    <location>
        <begin position="1"/>
        <end position="684"/>
    </location>
</feature>
<feature type="repeat" description="HAT 1">
    <location>
        <begin position="43"/>
        <end position="75"/>
    </location>
</feature>
<feature type="repeat" description="HAT 2">
    <location>
        <begin position="77"/>
        <end position="109"/>
    </location>
</feature>
<feature type="repeat" description="HAT 3">
    <location>
        <begin position="111"/>
        <end position="143"/>
    </location>
</feature>
<feature type="repeat" description="HAT 4">
    <location>
        <begin position="145"/>
        <end position="176"/>
    </location>
</feature>
<feature type="repeat" description="HAT 5">
    <location>
        <begin position="178"/>
        <end position="209"/>
    </location>
</feature>
<feature type="repeat" description="HAT 6">
    <location>
        <begin position="211"/>
        <end position="251"/>
    </location>
</feature>
<feature type="repeat" description="HAT 7">
    <location>
        <begin position="253"/>
        <end position="285"/>
    </location>
</feature>
<feature type="repeat" description="HAT 8">
    <location>
        <begin position="295"/>
        <end position="327"/>
    </location>
</feature>
<feature type="repeat" description="HAT 9">
    <location>
        <begin position="332"/>
        <end position="364"/>
    </location>
</feature>
<feature type="repeat" description="HAT 10">
    <location>
        <begin position="374"/>
        <end position="410"/>
    </location>
</feature>
<feature type="repeat" description="HAT 11">
    <location>
        <begin position="412"/>
        <end position="443"/>
    </location>
</feature>
<feature type="repeat" description="HAT 12">
    <location>
        <begin position="445"/>
        <end position="477"/>
    </location>
</feature>
<feature type="repeat" description="HAT 13">
    <location>
        <begin position="518"/>
        <end position="550"/>
    </location>
</feature>
<feature type="repeat" description="HAT 14">
    <location>
        <begin position="584"/>
        <end position="622"/>
    </location>
</feature>
<protein>
    <recommendedName>
        <fullName>Pre-mRNA-splicing factor CLF1</fullName>
    </recommendedName>
</protein>
<reference key="1">
    <citation type="journal article" date="2004" name="Nature">
        <title>Genome evolution in yeasts.</title>
        <authorList>
            <person name="Dujon B."/>
            <person name="Sherman D."/>
            <person name="Fischer G."/>
            <person name="Durrens P."/>
            <person name="Casaregola S."/>
            <person name="Lafontaine I."/>
            <person name="de Montigny J."/>
            <person name="Marck C."/>
            <person name="Neuveglise C."/>
            <person name="Talla E."/>
            <person name="Goffard N."/>
            <person name="Frangeul L."/>
            <person name="Aigle M."/>
            <person name="Anthouard V."/>
            <person name="Babour A."/>
            <person name="Barbe V."/>
            <person name="Barnay S."/>
            <person name="Blanchin S."/>
            <person name="Beckerich J.-M."/>
            <person name="Beyne E."/>
            <person name="Bleykasten C."/>
            <person name="Boisrame A."/>
            <person name="Boyer J."/>
            <person name="Cattolico L."/>
            <person name="Confanioleri F."/>
            <person name="de Daruvar A."/>
            <person name="Despons L."/>
            <person name="Fabre E."/>
            <person name="Fairhead C."/>
            <person name="Ferry-Dumazet H."/>
            <person name="Groppi A."/>
            <person name="Hantraye F."/>
            <person name="Hennequin C."/>
            <person name="Jauniaux N."/>
            <person name="Joyet P."/>
            <person name="Kachouri R."/>
            <person name="Kerrest A."/>
            <person name="Koszul R."/>
            <person name="Lemaire M."/>
            <person name="Lesur I."/>
            <person name="Ma L."/>
            <person name="Muller H."/>
            <person name="Nicaud J.-M."/>
            <person name="Nikolski M."/>
            <person name="Oztas S."/>
            <person name="Ozier-Kalogeropoulos O."/>
            <person name="Pellenz S."/>
            <person name="Potier S."/>
            <person name="Richard G.-F."/>
            <person name="Straub M.-L."/>
            <person name="Suleau A."/>
            <person name="Swennen D."/>
            <person name="Tekaia F."/>
            <person name="Wesolowski-Louvel M."/>
            <person name="Westhof E."/>
            <person name="Wirth B."/>
            <person name="Zeniou-Meyer M."/>
            <person name="Zivanovic Y."/>
            <person name="Bolotin-Fukuhara M."/>
            <person name="Thierry A."/>
            <person name="Bouchier C."/>
            <person name="Caudron B."/>
            <person name="Scarpelli C."/>
            <person name="Gaillardin C."/>
            <person name="Weissenbach J."/>
            <person name="Wincker P."/>
            <person name="Souciet J.-L."/>
        </authorList>
    </citation>
    <scope>NUCLEOTIDE SEQUENCE [LARGE SCALE GENOMIC DNA]</scope>
    <source>
        <strain>ATCC 8585 / CBS 2359 / DSM 70799 / NBRC 1267 / NRRL Y-1140 / WM37</strain>
    </source>
</reference>
<keyword id="KW-0507">mRNA processing</keyword>
<keyword id="KW-0508">mRNA splicing</keyword>
<keyword id="KW-0539">Nucleus</keyword>
<keyword id="KW-1185">Reference proteome</keyword>
<keyword id="KW-0677">Repeat</keyword>
<keyword id="KW-0747">Spliceosome</keyword>
<name>CLF1_KLULA</name>
<evidence type="ECO:0000250" key="1"/>
<evidence type="ECO:0000305" key="2"/>
<accession>Q6CJK2</accession>
<sequence length="684" mass="81230">MGDNSLSNEAITADNILKDAFSQKKQIAATTKADILDLEELKDWQRRKRTEYETVLKRNRLDLRQWMRYAQFEFDQKDIRRARSIYERALLVDHGFIPLWIQYIDSEIKWKNINHARNLLDRATNALPRVDKLWFKYLLLEESLGNQGIVRGIYTRWCSFEPGPDAWDSFIEFETRCLNFENVRNIYSKFVLVHPQIDTWLKWVRFEQTHGDISSVRTVFSFALDTLTSFSGTPLVDIERVIGSFASWEASQGEYERSRTLYRLAVERWPISEALKEQQIQFEKKFGSSKNMEDIVIAKRKAEYEQYLKSDPYHYSTWWVYIDLVEEKYQEQLTSAFQSFIELAKPKSLVKDSSWKRYIRICVRYLVYLELTINDLPTIRSVYQDILDIIPHKKFTFGKLWIMYAEFEIRQNNLLKARKILGVSLGKSPKPKVFKYYINLEIRLKEFDRVRKLYEKYIDFNPSSVQSWLDYAELEENLGDEDRSRGIYDISMSNNVGLSESDQLIVIQRYIAFETDAAEYEKARELYEKYLILSRYDVNIWINQALFESTIPTETQLIAYQQSHQDGNFDDDGEEEFSFEITPENKHHTRAIFEKAISYFKEHNEDKKRQQVLQSLLEYEKVHGNQETLEKVNARQPSLVREKVTIDNIEQESYKLDFPDDRVAQPPIARNLLALAKQWEKNSS</sequence>
<dbReference type="EMBL" id="CR382126">
    <property type="protein sequence ID" value="CAG98595.1"/>
    <property type="molecule type" value="Genomic_DNA"/>
</dbReference>
<dbReference type="RefSeq" id="XP_455887.1">
    <property type="nucleotide sequence ID" value="XM_455887.1"/>
</dbReference>
<dbReference type="SMR" id="Q6CJK2"/>
<dbReference type="FunCoup" id="Q6CJK2">
    <property type="interactions" value="1154"/>
</dbReference>
<dbReference type="STRING" id="284590.Q6CJK2"/>
<dbReference type="PaxDb" id="284590-Q6CJK2"/>
<dbReference type="KEGG" id="kla:KLLA0_F17996g"/>
<dbReference type="eggNOG" id="KOG1915">
    <property type="taxonomic scope" value="Eukaryota"/>
</dbReference>
<dbReference type="HOGENOM" id="CLU_011554_1_0_1"/>
<dbReference type="InParanoid" id="Q6CJK2"/>
<dbReference type="OMA" id="HIKVWIS"/>
<dbReference type="Proteomes" id="UP000000598">
    <property type="component" value="Chromosome F"/>
</dbReference>
<dbReference type="GO" id="GO:0071014">
    <property type="term" value="C:post-mRNA release spliceosomal complex"/>
    <property type="evidence" value="ECO:0007669"/>
    <property type="project" value="TreeGrafter"/>
</dbReference>
<dbReference type="GO" id="GO:0071011">
    <property type="term" value="C:precatalytic spliceosome"/>
    <property type="evidence" value="ECO:0007669"/>
    <property type="project" value="TreeGrafter"/>
</dbReference>
<dbReference type="GO" id="GO:0000974">
    <property type="term" value="C:Prp19 complex"/>
    <property type="evidence" value="ECO:0007669"/>
    <property type="project" value="TreeGrafter"/>
</dbReference>
<dbReference type="GO" id="GO:0071007">
    <property type="term" value="C:U2-type catalytic step 2 spliceosome"/>
    <property type="evidence" value="ECO:0007669"/>
    <property type="project" value="TreeGrafter"/>
</dbReference>
<dbReference type="GO" id="GO:0000245">
    <property type="term" value="P:spliceosomal complex assembly"/>
    <property type="evidence" value="ECO:0007669"/>
    <property type="project" value="TreeGrafter"/>
</dbReference>
<dbReference type="Gene3D" id="1.25.40.10">
    <property type="entry name" value="Tetratricopeptide repeat domain"/>
    <property type="match status" value="4"/>
</dbReference>
<dbReference type="InterPro" id="IPR003107">
    <property type="entry name" value="HAT"/>
</dbReference>
<dbReference type="InterPro" id="IPR055433">
    <property type="entry name" value="HAT_Syf1-like_N"/>
</dbReference>
<dbReference type="InterPro" id="IPR045075">
    <property type="entry name" value="Syf1-like"/>
</dbReference>
<dbReference type="InterPro" id="IPR011990">
    <property type="entry name" value="TPR-like_helical_dom_sf"/>
</dbReference>
<dbReference type="PANTHER" id="PTHR11246:SF3">
    <property type="entry name" value="CROOKED NECK-LIKE PROTEIN 1"/>
    <property type="match status" value="1"/>
</dbReference>
<dbReference type="PANTHER" id="PTHR11246">
    <property type="entry name" value="PRE-MRNA SPLICING FACTOR"/>
    <property type="match status" value="1"/>
</dbReference>
<dbReference type="Pfam" id="PF23233">
    <property type="entry name" value="HAT_Syf1_CNRKL1_N"/>
    <property type="match status" value="1"/>
</dbReference>
<dbReference type="SMART" id="SM00386">
    <property type="entry name" value="HAT"/>
    <property type="match status" value="12"/>
</dbReference>
<dbReference type="SUPFAM" id="SSF48452">
    <property type="entry name" value="TPR-like"/>
    <property type="match status" value="2"/>
</dbReference>
<comment type="function">
    <text evidence="1">Involved in pre-mRNA splicing and cell cycle progression. Required for the spliceosome assembly and initiation of the DNA replication (By similarity).</text>
</comment>
<comment type="subunit">
    <text evidence="1">Associated with the spliceosome.</text>
</comment>
<comment type="subcellular location">
    <subcellularLocation>
        <location evidence="1">Nucleus</location>
    </subcellularLocation>
</comment>
<comment type="similarity">
    <text evidence="2">Belongs to the crooked-neck family.</text>
</comment>